<comment type="function">
    <text evidence="1">Component of the SOSS complex, a multiprotein complex that functions downstream of the MRN complex to promote DNA repair and G2/M checkpoint. In the SOSS complex, acts as a sensor of single-stranded DNA that binds to single-stranded DNA. The SOSS complex associates with DNA lesions and influences diverse endpoints in the cellular DNA damage response including cell-cycle checkpoint activation, recombinational repair and maintenance of genomic stability. Required for efficient homologous recombination-dependent repair of double-strand breaks (DSBs) (By similarity).</text>
</comment>
<comment type="subunit">
    <text evidence="1">Component of the SOSS complex, composed of soss-b (soss-b1/nabp2 or soss-b2/nabp1), soss-a/ints3 and soss-c/inip. SOSS complexes containing soss-b1/nabp2 are more abundant than complexes containing soss-b2/nabp1 (By similarity).</text>
</comment>
<comment type="subcellular location">
    <subcellularLocation>
        <location evidence="1">Nucleus</location>
    </subcellularLocation>
    <text evidence="1">Localizes to nuclear foci following DNA damage.</text>
</comment>
<comment type="similarity">
    <text evidence="3">Belongs to the SOSS-B family. SOSS-B1 subfamily.</text>
</comment>
<name>SOSB1_XENTR</name>
<sequence>MTTETFVKDVKPGLKNLSVLFIVLETGRVTKTKDGHEVRTCKVADKTGSINISVWDDLGNFIQPGDIIRLTKGYASLFKGCLTLYTGRGGDLQKIGEFCMVYSEVPNFSEPNPEYIAQQSQNKQAQAESGTGTNSHNSSSPAPPASDLENGNGSNSSGPPTHQSTAPTHSTSGRITRSQPNHSIPGAPNSVSNGKEPRRTGKR</sequence>
<organism>
    <name type="scientific">Xenopus tropicalis</name>
    <name type="common">Western clawed frog</name>
    <name type="synonym">Silurana tropicalis</name>
    <dbReference type="NCBI Taxonomy" id="8364"/>
    <lineage>
        <taxon>Eukaryota</taxon>
        <taxon>Metazoa</taxon>
        <taxon>Chordata</taxon>
        <taxon>Craniata</taxon>
        <taxon>Vertebrata</taxon>
        <taxon>Euteleostomi</taxon>
        <taxon>Amphibia</taxon>
        <taxon>Batrachia</taxon>
        <taxon>Anura</taxon>
        <taxon>Pipoidea</taxon>
        <taxon>Pipidae</taxon>
        <taxon>Xenopodinae</taxon>
        <taxon>Xenopus</taxon>
        <taxon>Silurana</taxon>
    </lineage>
</organism>
<reference key="1">
    <citation type="submission" date="2006-10" db="EMBL/GenBank/DDBJ databases">
        <authorList>
            <consortium name="Sanger Xenopus tropicalis EST/cDNA project"/>
        </authorList>
    </citation>
    <scope>NUCLEOTIDE SEQUENCE [LARGE SCALE MRNA]</scope>
    <source>
        <tissue>Gastrula</tissue>
    </source>
</reference>
<reference key="2">
    <citation type="submission" date="2004-08" db="EMBL/GenBank/DDBJ databases">
        <authorList>
            <consortium name="NIH - Xenopus Gene Collection (XGC) project"/>
        </authorList>
    </citation>
    <scope>NUCLEOTIDE SEQUENCE [LARGE SCALE MRNA]</scope>
    <source>
        <tissue>Embryo</tissue>
    </source>
</reference>
<feature type="chain" id="PRO_0000333964" description="SOSS complex subunit B1">
    <location>
        <begin position="1"/>
        <end position="203"/>
    </location>
</feature>
<feature type="DNA-binding region" description="OB">
    <location>
        <begin position="22"/>
        <end position="92"/>
    </location>
</feature>
<feature type="region of interest" description="Disordered" evidence="2">
    <location>
        <begin position="111"/>
        <end position="203"/>
    </location>
</feature>
<feature type="compositionally biased region" description="Polar residues" evidence="2">
    <location>
        <begin position="117"/>
        <end position="128"/>
    </location>
</feature>
<feature type="compositionally biased region" description="Low complexity" evidence="2">
    <location>
        <begin position="129"/>
        <end position="140"/>
    </location>
</feature>
<feature type="compositionally biased region" description="Polar residues" evidence="2">
    <location>
        <begin position="149"/>
        <end position="182"/>
    </location>
</feature>
<gene>
    <name type="primary">nabp2</name>
    <name type="synonym">obfc2b</name>
    <name type="synonym">ssb1</name>
    <name type="ORF">TGas103n10.1</name>
</gene>
<evidence type="ECO:0000250" key="1"/>
<evidence type="ECO:0000256" key="2">
    <source>
        <dbReference type="SAM" id="MobiDB-lite"/>
    </source>
</evidence>
<evidence type="ECO:0000305" key="3"/>
<keyword id="KW-0227">DNA damage</keyword>
<keyword id="KW-0234">DNA repair</keyword>
<keyword id="KW-0238">DNA-binding</keyword>
<keyword id="KW-0539">Nucleus</keyword>
<keyword id="KW-1185">Reference proteome</keyword>
<protein>
    <recommendedName>
        <fullName>SOSS complex subunit B1</fullName>
    </recommendedName>
    <alternativeName>
        <fullName>Nucleic acid-binding protein 2</fullName>
    </alternativeName>
    <alternativeName>
        <fullName>Oligonucleotide/oligosaccharide-binding fold-containing protein 2B</fullName>
    </alternativeName>
    <alternativeName>
        <fullName>Sensor of single-strand DNA complex subunit B1</fullName>
    </alternativeName>
    <alternativeName>
        <fullName>Sensor of ssDNA subunit B1</fullName>
        <shortName>SOSS-B1</shortName>
    </alternativeName>
    <alternativeName>
        <fullName>Single-stranded DNA-binding protein 1</fullName>
    </alternativeName>
</protein>
<accession>Q66K94</accession>
<dbReference type="EMBL" id="CR762209">
    <property type="protein sequence ID" value="CAJ81599.1"/>
    <property type="molecule type" value="mRNA"/>
</dbReference>
<dbReference type="EMBL" id="BC080502">
    <property type="protein sequence ID" value="AAH80502.1"/>
    <property type="molecule type" value="mRNA"/>
</dbReference>
<dbReference type="RefSeq" id="NP_001007990.1">
    <property type="nucleotide sequence ID" value="NM_001007989.1"/>
</dbReference>
<dbReference type="RefSeq" id="XP_031751756.1">
    <property type="nucleotide sequence ID" value="XM_031895896.1"/>
</dbReference>
<dbReference type="SMR" id="Q66K94"/>
<dbReference type="FunCoup" id="Q66K94">
    <property type="interactions" value="1892"/>
</dbReference>
<dbReference type="STRING" id="8364.ENSXETP00000040668"/>
<dbReference type="PaxDb" id="8364-ENSXETP00000053108"/>
<dbReference type="GeneID" id="493352"/>
<dbReference type="KEGG" id="xtr:493352"/>
<dbReference type="AGR" id="Xenbase:XB-GENE-985188"/>
<dbReference type="CTD" id="79035"/>
<dbReference type="Xenbase" id="XB-GENE-985188">
    <property type="gene designation" value="nabp2"/>
</dbReference>
<dbReference type="eggNOG" id="KOG3416">
    <property type="taxonomic scope" value="Eukaryota"/>
</dbReference>
<dbReference type="HOGENOM" id="CLU_102724_3_1_1"/>
<dbReference type="InParanoid" id="Q66K94"/>
<dbReference type="OMA" id="HIFFRQF"/>
<dbReference type="OrthoDB" id="295715at2759"/>
<dbReference type="Reactome" id="R-XTR-6807505">
    <property type="pathway name" value="RNA polymerase II transcribes snRNA genes"/>
</dbReference>
<dbReference type="Proteomes" id="UP000008143">
    <property type="component" value="Chromosome 2"/>
</dbReference>
<dbReference type="Bgee" id="ENSXETG00000024652">
    <property type="expression patterns" value="Expressed in egg cell and 14 other cell types or tissues"/>
</dbReference>
<dbReference type="ExpressionAtlas" id="Q66K94">
    <property type="expression patterns" value="differential"/>
</dbReference>
<dbReference type="GO" id="GO:0005634">
    <property type="term" value="C:nucleus"/>
    <property type="evidence" value="ECO:0000250"/>
    <property type="project" value="UniProtKB"/>
</dbReference>
<dbReference type="GO" id="GO:0070876">
    <property type="term" value="C:SOSS complex"/>
    <property type="evidence" value="ECO:0000250"/>
    <property type="project" value="UniProtKB"/>
</dbReference>
<dbReference type="GO" id="GO:0003697">
    <property type="term" value="F:single-stranded DNA binding"/>
    <property type="evidence" value="ECO:0000250"/>
    <property type="project" value="UniProtKB"/>
</dbReference>
<dbReference type="GO" id="GO:0006974">
    <property type="term" value="P:DNA damage response"/>
    <property type="evidence" value="ECO:0000250"/>
    <property type="project" value="UniProtKB"/>
</dbReference>
<dbReference type="GO" id="GO:0006281">
    <property type="term" value="P:DNA repair"/>
    <property type="evidence" value="ECO:0000250"/>
    <property type="project" value="UniProtKB"/>
</dbReference>
<dbReference type="GO" id="GO:0000724">
    <property type="term" value="P:double-strand break repair via homologous recombination"/>
    <property type="evidence" value="ECO:0000250"/>
    <property type="project" value="UniProtKB"/>
</dbReference>
<dbReference type="GO" id="GO:0044818">
    <property type="term" value="P:mitotic G2/M transition checkpoint"/>
    <property type="evidence" value="ECO:0000250"/>
    <property type="project" value="UniProtKB"/>
</dbReference>
<dbReference type="GO" id="GO:0010212">
    <property type="term" value="P:response to ionizing radiation"/>
    <property type="evidence" value="ECO:0000250"/>
    <property type="project" value="UniProtKB"/>
</dbReference>
<dbReference type="CDD" id="cd04491">
    <property type="entry name" value="SoSSB_OBF"/>
    <property type="match status" value="1"/>
</dbReference>
<dbReference type="FunFam" id="2.40.50.140:FF:000072">
    <property type="entry name" value="SOSS complex subunit B2"/>
    <property type="match status" value="1"/>
</dbReference>
<dbReference type="Gene3D" id="2.40.50.140">
    <property type="entry name" value="Nucleic acid-binding proteins"/>
    <property type="match status" value="1"/>
</dbReference>
<dbReference type="InterPro" id="IPR012340">
    <property type="entry name" value="NA-bd_OB-fold"/>
</dbReference>
<dbReference type="InterPro" id="IPR051231">
    <property type="entry name" value="SOSS-B"/>
</dbReference>
<dbReference type="PANTHER" id="PTHR13356">
    <property type="entry name" value="OB FOLD NUCLEIC ACID BINDING PROTEIN-RELATED"/>
    <property type="match status" value="1"/>
</dbReference>
<dbReference type="PANTHER" id="PTHR13356:SF3">
    <property type="entry name" value="SOSS COMPLEX SUBUNIT B1"/>
    <property type="match status" value="1"/>
</dbReference>
<dbReference type="SUPFAM" id="SSF50249">
    <property type="entry name" value="Nucleic acid-binding proteins"/>
    <property type="match status" value="1"/>
</dbReference>
<proteinExistence type="evidence at transcript level"/>